<feature type="chain" id="PRO_0000112229" description="ATP synthase subunit 9, mitochondrial">
    <location>
        <begin position="1"/>
        <end position="75"/>
    </location>
</feature>
<feature type="transmembrane region" description="Helical" evidence="2">
    <location>
        <begin position="10"/>
        <end position="30"/>
    </location>
</feature>
<feature type="transmembrane region" description="Helical" evidence="2">
    <location>
        <begin position="55"/>
        <end position="75"/>
    </location>
</feature>
<feature type="site" description="Reversibly protonated during proton transport" evidence="1">
    <location>
        <position position="59"/>
    </location>
</feature>
<evidence type="ECO:0000250" key="1"/>
<evidence type="ECO:0000255" key="2"/>
<evidence type="ECO:0000305" key="3"/>
<keyword id="KW-0138">CF(0)</keyword>
<keyword id="KW-0375">Hydrogen ion transport</keyword>
<keyword id="KW-0406">Ion transport</keyword>
<keyword id="KW-0446">Lipid-binding</keyword>
<keyword id="KW-0472">Membrane</keyword>
<keyword id="KW-0496">Mitochondrion</keyword>
<keyword id="KW-0812">Transmembrane</keyword>
<keyword id="KW-1133">Transmembrane helix</keyword>
<keyword id="KW-0813">Transport</keyword>
<comment type="function">
    <text>Mitochondrial membrane ATP synthase (F(1)F(0) ATP synthase or Complex V) produces ATP from ADP in the presence of a proton gradient across the membrane which is generated by electron transport complexes of the respiratory chain. F-type ATPases consist of two structural domains, F(1) - containing the extramembraneous catalytic core and F(0) - containing the membrane proton channel, linked together by a central stalk and a peripheral stalk. During catalysis, ATP synthesis in the catalytic domain of F(1) is coupled via a rotary mechanism of the central stalk subunits to proton translocation. Part of the complex F(0) domain. A homomeric c-ring of probably 10 subunits is part of the complex rotary element.</text>
</comment>
<comment type="subunit">
    <text>F-type ATPases have 2 components, CF(1) - the catalytic core - and CF(0) - the membrane proton channel. CF(1) has five subunits: alpha(3), beta(3), gamma(1), delta(1), epsilon(1). CF(0) has three main subunits: a, b and c.</text>
</comment>
<comment type="subcellular location">
    <subcellularLocation>
        <location evidence="3">Mitochondrion membrane</location>
        <topology evidence="3">Multi-pass membrane protein</topology>
    </subcellularLocation>
</comment>
<comment type="similarity">
    <text evidence="3">Belongs to the ATPase C chain family.</text>
</comment>
<protein>
    <recommendedName>
        <fullName>ATP synthase subunit 9, mitochondrial</fullName>
    </recommendedName>
    <alternativeName>
        <fullName>Lipid-binding protein</fullName>
    </alternativeName>
</protein>
<name>ATP9_PARTE</name>
<organism>
    <name type="scientific">Paramecium tetraurelia</name>
    <dbReference type="NCBI Taxonomy" id="5888"/>
    <lineage>
        <taxon>Eukaryota</taxon>
        <taxon>Sar</taxon>
        <taxon>Alveolata</taxon>
        <taxon>Ciliophora</taxon>
        <taxon>Intramacronucleata</taxon>
        <taxon>Oligohymenophorea</taxon>
        <taxon>Peniculida</taxon>
        <taxon>Parameciidae</taxon>
        <taxon>Paramecium</taxon>
    </lineage>
</organism>
<proteinExistence type="inferred from homology"/>
<gene>
    <name type="primary">ATP9</name>
</gene>
<accession>P16001</accession>
<reference key="1">
    <citation type="journal article" date="1990" name="Nucleic Acids Res.">
        <title>Nucleotide sequence of the mitochondrial genome of Paramecium.</title>
        <authorList>
            <person name="Pritchard A.E."/>
            <person name="Seilhamer J.J."/>
            <person name="Mahalingam R."/>
            <person name="Sable C.L."/>
            <person name="Venuti S.E."/>
            <person name="Cummings D.J."/>
        </authorList>
    </citation>
    <scope>NUCLEOTIDE SEQUENCE [GENOMIC DNA]</scope>
    <source>
        <strain>Stock 51</strain>
    </source>
</reference>
<geneLocation type="mitochondrion"/>
<sequence length="75" mass="8084">MLLVLAIKTLVLGLCMLPISAAALGVGILFAGYNIAVSRNPDEAETIFNGTLMGFALVETFVFMSFFFGVIVYFI</sequence>
<dbReference type="EMBL" id="X15917">
    <property type="protein sequence ID" value="CAA34039.1"/>
    <property type="molecule type" value="Genomic_DNA"/>
</dbReference>
<dbReference type="PIR" id="S07730">
    <property type="entry name" value="S07730"/>
</dbReference>
<dbReference type="SMR" id="P16001"/>
<dbReference type="GO" id="GO:0031966">
    <property type="term" value="C:mitochondrial membrane"/>
    <property type="evidence" value="ECO:0007669"/>
    <property type="project" value="UniProtKB-SubCell"/>
</dbReference>
<dbReference type="GO" id="GO:0045259">
    <property type="term" value="C:proton-transporting ATP synthase complex"/>
    <property type="evidence" value="ECO:0007669"/>
    <property type="project" value="UniProtKB-KW"/>
</dbReference>
<dbReference type="GO" id="GO:0033177">
    <property type="term" value="C:proton-transporting two-sector ATPase complex, proton-transporting domain"/>
    <property type="evidence" value="ECO:0007669"/>
    <property type="project" value="InterPro"/>
</dbReference>
<dbReference type="GO" id="GO:0008289">
    <property type="term" value="F:lipid binding"/>
    <property type="evidence" value="ECO:0007669"/>
    <property type="project" value="UniProtKB-KW"/>
</dbReference>
<dbReference type="GO" id="GO:0015078">
    <property type="term" value="F:proton transmembrane transporter activity"/>
    <property type="evidence" value="ECO:0007669"/>
    <property type="project" value="InterPro"/>
</dbReference>
<dbReference type="Gene3D" id="1.20.20.10">
    <property type="entry name" value="F1F0 ATP synthase subunit C"/>
    <property type="match status" value="1"/>
</dbReference>
<dbReference type="InterPro" id="IPR020537">
    <property type="entry name" value="ATP_synth_F0_csu_DDCD_BS"/>
</dbReference>
<dbReference type="InterPro" id="IPR038662">
    <property type="entry name" value="ATP_synth_F0_csu_sf"/>
</dbReference>
<dbReference type="InterPro" id="IPR002379">
    <property type="entry name" value="ATPase_proteolipid_c-like_dom"/>
</dbReference>
<dbReference type="InterPro" id="IPR035921">
    <property type="entry name" value="F/V-ATP_Csub_sf"/>
</dbReference>
<dbReference type="Pfam" id="PF00137">
    <property type="entry name" value="ATP-synt_C"/>
    <property type="match status" value="1"/>
</dbReference>
<dbReference type="SUPFAM" id="SSF81333">
    <property type="entry name" value="F1F0 ATP synthase subunit C"/>
    <property type="match status" value="1"/>
</dbReference>
<dbReference type="PROSITE" id="PS00605">
    <property type="entry name" value="ATPASE_C"/>
    <property type="match status" value="1"/>
</dbReference>